<comment type="function">
    <text evidence="1">Involved in pre-mRNA splicing.</text>
</comment>
<comment type="subunit">
    <text evidence="1">Associated with the spliceosome.</text>
</comment>
<comment type="subcellular location">
    <subcellularLocation>
        <location evidence="1">Nucleus</location>
    </subcellularLocation>
</comment>
<comment type="similarity">
    <text evidence="3">Belongs to the SNW family.</text>
</comment>
<evidence type="ECO:0000250" key="1"/>
<evidence type="ECO:0000256" key="2">
    <source>
        <dbReference type="SAM" id="MobiDB-lite"/>
    </source>
</evidence>
<evidence type="ECO:0000305" key="3"/>
<sequence length="414" mass="46265">MSFSSLLPPPEHSPPDDVNSREVEIITKEHDFIVNALTKKEAVHSSNNNIGSFVGSQVANFNDVIPLRQKDFYGVQAPLPTTQEIELCKVRTQEVVNRLLHKFTDKGKAGYQKDTRKITTGSRIITIESKRQDPLQPSRQKNTSSKIVLPEDDETDTPILHATDDAKSKRLTKEERAKWNIPAAVSSWKNPMGYTVGLKHRAAHGKKTGNVGSINNKVSDIVAALDETDQEIREGIQQENELKRKQLKEEERIKEEKLRAIAERSKIQTQSSAVKKRGSRFEGGRHQNKKIKKEEPPIKSAAERLKELAYAQGREVSEKVILGAAKATTTGTGANVHYDSRLFSKGANAAAKRSEEQVYDNPLFVQQEIDSIYRVNAKSIDEANSVSASRYGPIQFTKAHSLDDKSTAKDEEET</sequence>
<proteinExistence type="inferred from homology"/>
<organism>
    <name type="scientific">Candida glabrata (strain ATCC 2001 / BCRC 20586 / JCM 3761 / NBRC 0622 / NRRL Y-65 / CBS 138)</name>
    <name type="common">Yeast</name>
    <name type="synonym">Nakaseomyces glabratus</name>
    <dbReference type="NCBI Taxonomy" id="284593"/>
    <lineage>
        <taxon>Eukaryota</taxon>
        <taxon>Fungi</taxon>
        <taxon>Dikarya</taxon>
        <taxon>Ascomycota</taxon>
        <taxon>Saccharomycotina</taxon>
        <taxon>Saccharomycetes</taxon>
        <taxon>Saccharomycetales</taxon>
        <taxon>Saccharomycetaceae</taxon>
        <taxon>Nakaseomyces</taxon>
    </lineage>
</organism>
<dbReference type="EMBL" id="CR380959">
    <property type="protein sequence ID" value="CAG62835.1"/>
    <property type="molecule type" value="Genomic_DNA"/>
</dbReference>
<dbReference type="RefSeq" id="XP_449855.1">
    <property type="nucleotide sequence ID" value="XM_449855.1"/>
</dbReference>
<dbReference type="FunCoup" id="Q6FIT9">
    <property type="interactions" value="1070"/>
</dbReference>
<dbReference type="STRING" id="284593.Q6FIT9"/>
<dbReference type="EnsemblFungi" id="CAGL0M11814g-T">
    <property type="protein sequence ID" value="CAGL0M11814g-T-p1"/>
    <property type="gene ID" value="CAGL0M11814g"/>
</dbReference>
<dbReference type="KEGG" id="cgr:2891250"/>
<dbReference type="CGD" id="CAL0136955">
    <property type="gene designation" value="CAGL0M11814g"/>
</dbReference>
<dbReference type="VEuPathDB" id="FungiDB:CAGL0M11814g"/>
<dbReference type="eggNOG" id="KOG2441">
    <property type="taxonomic scope" value="Eukaryota"/>
</dbReference>
<dbReference type="HOGENOM" id="CLU_006601_3_1_1"/>
<dbReference type="InParanoid" id="Q6FIT9"/>
<dbReference type="OMA" id="EDQVYDN"/>
<dbReference type="Proteomes" id="UP000002428">
    <property type="component" value="Chromosome M"/>
</dbReference>
<dbReference type="GO" id="GO:0071014">
    <property type="term" value="C:post-mRNA release spliceosomal complex"/>
    <property type="evidence" value="ECO:0007669"/>
    <property type="project" value="EnsemblFungi"/>
</dbReference>
<dbReference type="GO" id="GO:0000974">
    <property type="term" value="C:Prp19 complex"/>
    <property type="evidence" value="ECO:0007669"/>
    <property type="project" value="EnsemblFungi"/>
</dbReference>
<dbReference type="GO" id="GO:0071006">
    <property type="term" value="C:U2-type catalytic step 1 spliceosome"/>
    <property type="evidence" value="ECO:0007669"/>
    <property type="project" value="EnsemblFungi"/>
</dbReference>
<dbReference type="GO" id="GO:0071007">
    <property type="term" value="C:U2-type catalytic step 2 spliceosome"/>
    <property type="evidence" value="ECO:0007669"/>
    <property type="project" value="EnsemblFungi"/>
</dbReference>
<dbReference type="GO" id="GO:0000350">
    <property type="term" value="P:generation of catalytic spliceosome for second transesterification step"/>
    <property type="evidence" value="ECO:0007669"/>
    <property type="project" value="EnsemblFungi"/>
</dbReference>
<dbReference type="InterPro" id="IPR017862">
    <property type="entry name" value="SKI-int_prot_SKIP"/>
</dbReference>
<dbReference type="InterPro" id="IPR004015">
    <property type="entry name" value="SKI-int_prot_SKIP_SNW-dom"/>
</dbReference>
<dbReference type="PANTHER" id="PTHR12096">
    <property type="entry name" value="NUCLEAR PROTEIN SKIP-RELATED"/>
    <property type="match status" value="1"/>
</dbReference>
<dbReference type="Pfam" id="PF02731">
    <property type="entry name" value="SKIP_SNW"/>
    <property type="match status" value="1"/>
</dbReference>
<accession>Q6FIT9</accession>
<reference key="1">
    <citation type="journal article" date="2004" name="Nature">
        <title>Genome evolution in yeasts.</title>
        <authorList>
            <person name="Dujon B."/>
            <person name="Sherman D."/>
            <person name="Fischer G."/>
            <person name="Durrens P."/>
            <person name="Casaregola S."/>
            <person name="Lafontaine I."/>
            <person name="de Montigny J."/>
            <person name="Marck C."/>
            <person name="Neuveglise C."/>
            <person name="Talla E."/>
            <person name="Goffard N."/>
            <person name="Frangeul L."/>
            <person name="Aigle M."/>
            <person name="Anthouard V."/>
            <person name="Babour A."/>
            <person name="Barbe V."/>
            <person name="Barnay S."/>
            <person name="Blanchin S."/>
            <person name="Beckerich J.-M."/>
            <person name="Beyne E."/>
            <person name="Bleykasten C."/>
            <person name="Boisrame A."/>
            <person name="Boyer J."/>
            <person name="Cattolico L."/>
            <person name="Confanioleri F."/>
            <person name="de Daruvar A."/>
            <person name="Despons L."/>
            <person name="Fabre E."/>
            <person name="Fairhead C."/>
            <person name="Ferry-Dumazet H."/>
            <person name="Groppi A."/>
            <person name="Hantraye F."/>
            <person name="Hennequin C."/>
            <person name="Jauniaux N."/>
            <person name="Joyet P."/>
            <person name="Kachouri R."/>
            <person name="Kerrest A."/>
            <person name="Koszul R."/>
            <person name="Lemaire M."/>
            <person name="Lesur I."/>
            <person name="Ma L."/>
            <person name="Muller H."/>
            <person name="Nicaud J.-M."/>
            <person name="Nikolski M."/>
            <person name="Oztas S."/>
            <person name="Ozier-Kalogeropoulos O."/>
            <person name="Pellenz S."/>
            <person name="Potier S."/>
            <person name="Richard G.-F."/>
            <person name="Straub M.-L."/>
            <person name="Suleau A."/>
            <person name="Swennen D."/>
            <person name="Tekaia F."/>
            <person name="Wesolowski-Louvel M."/>
            <person name="Westhof E."/>
            <person name="Wirth B."/>
            <person name="Zeniou-Meyer M."/>
            <person name="Zivanovic Y."/>
            <person name="Bolotin-Fukuhara M."/>
            <person name="Thierry A."/>
            <person name="Bouchier C."/>
            <person name="Caudron B."/>
            <person name="Scarpelli C."/>
            <person name="Gaillardin C."/>
            <person name="Weissenbach J."/>
            <person name="Wincker P."/>
            <person name="Souciet J.-L."/>
        </authorList>
    </citation>
    <scope>NUCLEOTIDE SEQUENCE [LARGE SCALE GENOMIC DNA]</scope>
    <source>
        <strain>ATCC 2001 / BCRC 20586 / JCM 3761 / NBRC 0622 / NRRL Y-65 / CBS 138</strain>
    </source>
</reference>
<name>PRP45_CANGA</name>
<protein>
    <recommendedName>
        <fullName>Pre-mRNA-processing protein 45</fullName>
    </recommendedName>
</protein>
<gene>
    <name type="primary">PRP45</name>
    <name type="ordered locus">CAGL0M11814g</name>
</gene>
<keyword id="KW-0507">mRNA processing</keyword>
<keyword id="KW-0508">mRNA splicing</keyword>
<keyword id="KW-0539">Nucleus</keyword>
<keyword id="KW-1185">Reference proteome</keyword>
<keyword id="KW-0747">Spliceosome</keyword>
<feature type="chain" id="PRO_0000084817" description="Pre-mRNA-processing protein 45">
    <location>
        <begin position="1"/>
        <end position="414"/>
    </location>
</feature>
<feature type="region of interest" description="Disordered" evidence="2">
    <location>
        <begin position="128"/>
        <end position="159"/>
    </location>
</feature>
<feature type="region of interest" description="Disordered" evidence="2">
    <location>
        <begin position="264"/>
        <end position="292"/>
    </location>
</feature>
<feature type="compositionally biased region" description="Polar residues" evidence="2">
    <location>
        <begin position="135"/>
        <end position="146"/>
    </location>
</feature>